<protein>
    <recommendedName>
        <fullName>Transcription activator of gluconeogenesis ERT1</fullName>
    </recommendedName>
</protein>
<keyword id="KW-0010">Activator</keyword>
<keyword id="KW-0238">DNA-binding</keyword>
<keyword id="KW-0312">Gluconeogenesis</keyword>
<keyword id="KW-0479">Metal-binding</keyword>
<keyword id="KW-0539">Nucleus</keyword>
<keyword id="KW-1185">Reference proteome</keyword>
<keyword id="KW-0804">Transcription</keyword>
<keyword id="KW-0805">Transcription regulation</keyword>
<keyword id="KW-0862">Zinc</keyword>
<feature type="chain" id="PRO_0000406463" description="Transcription activator of gluconeogenesis ERT1">
    <location>
        <begin position="1"/>
        <end position="548"/>
    </location>
</feature>
<feature type="DNA-binding region" description="Zn(2)-C6 fungal-type" evidence="2">
    <location>
        <begin position="88"/>
        <end position="116"/>
    </location>
</feature>
<feature type="region of interest" description="Disordered" evidence="3">
    <location>
        <begin position="1"/>
        <end position="86"/>
    </location>
</feature>
<feature type="region of interest" description="Disordered" evidence="3">
    <location>
        <begin position="138"/>
        <end position="168"/>
    </location>
</feature>
<feature type="region of interest" description="Disordered" evidence="3">
    <location>
        <begin position="196"/>
        <end position="261"/>
    </location>
</feature>
<feature type="region of interest" description="Disordered" evidence="3">
    <location>
        <begin position="290"/>
        <end position="346"/>
    </location>
</feature>
<feature type="compositionally biased region" description="Polar residues" evidence="3">
    <location>
        <begin position="22"/>
        <end position="37"/>
    </location>
</feature>
<feature type="compositionally biased region" description="Polar residues" evidence="3">
    <location>
        <begin position="141"/>
        <end position="154"/>
    </location>
</feature>
<feature type="compositionally biased region" description="Pro residues" evidence="3">
    <location>
        <begin position="203"/>
        <end position="220"/>
    </location>
</feature>
<feature type="compositionally biased region" description="Polar residues" evidence="3">
    <location>
        <begin position="240"/>
        <end position="261"/>
    </location>
</feature>
<feature type="compositionally biased region" description="Low complexity" evidence="3">
    <location>
        <begin position="336"/>
        <end position="346"/>
    </location>
</feature>
<name>ERT1_LACBS</name>
<proteinExistence type="inferred from homology"/>
<gene>
    <name type="primary">ERT1</name>
    <name type="ORF">LACBIDRAFT_399488</name>
</gene>
<dbReference type="EMBL" id="DS547095">
    <property type="protein sequence ID" value="EDR11520.1"/>
    <property type="molecule type" value="Genomic_DNA"/>
</dbReference>
<dbReference type="RefSeq" id="XP_001877417.1">
    <property type="nucleotide sequence ID" value="XM_001877382.1"/>
</dbReference>
<dbReference type="SMR" id="B0D0T8"/>
<dbReference type="GeneID" id="6073497"/>
<dbReference type="KEGG" id="lbc:LACBIDRAFT_399488"/>
<dbReference type="HOGENOM" id="CLU_010748_2_1_1"/>
<dbReference type="InParanoid" id="B0D0T8"/>
<dbReference type="OrthoDB" id="2538135at2759"/>
<dbReference type="Proteomes" id="UP000001194">
    <property type="component" value="Unassembled WGS sequence"/>
</dbReference>
<dbReference type="GO" id="GO:0005634">
    <property type="term" value="C:nucleus"/>
    <property type="evidence" value="ECO:0007669"/>
    <property type="project" value="UniProtKB-SubCell"/>
</dbReference>
<dbReference type="GO" id="GO:0000981">
    <property type="term" value="F:DNA-binding transcription factor activity, RNA polymerase II-specific"/>
    <property type="evidence" value="ECO:0007669"/>
    <property type="project" value="InterPro"/>
</dbReference>
<dbReference type="GO" id="GO:0000977">
    <property type="term" value="F:RNA polymerase II transcription regulatory region sequence-specific DNA binding"/>
    <property type="evidence" value="ECO:0007669"/>
    <property type="project" value="TreeGrafter"/>
</dbReference>
<dbReference type="GO" id="GO:0008270">
    <property type="term" value="F:zinc ion binding"/>
    <property type="evidence" value="ECO:0007669"/>
    <property type="project" value="InterPro"/>
</dbReference>
<dbReference type="GO" id="GO:0009267">
    <property type="term" value="P:cellular response to starvation"/>
    <property type="evidence" value="ECO:0007669"/>
    <property type="project" value="TreeGrafter"/>
</dbReference>
<dbReference type="GO" id="GO:0006094">
    <property type="term" value="P:gluconeogenesis"/>
    <property type="evidence" value="ECO:0007669"/>
    <property type="project" value="UniProtKB-KW"/>
</dbReference>
<dbReference type="CDD" id="cd00067">
    <property type="entry name" value="GAL4"/>
    <property type="match status" value="1"/>
</dbReference>
<dbReference type="Gene3D" id="4.10.240.10">
    <property type="entry name" value="Zn(2)-C6 fungal-type DNA-binding domain"/>
    <property type="match status" value="1"/>
</dbReference>
<dbReference type="InterPro" id="IPR050335">
    <property type="entry name" value="ERT1_acuK_gluconeogen_tf"/>
</dbReference>
<dbReference type="InterPro" id="IPR056751">
    <property type="entry name" value="PAS_13"/>
</dbReference>
<dbReference type="InterPro" id="IPR036864">
    <property type="entry name" value="Zn2-C6_fun-type_DNA-bd_sf"/>
</dbReference>
<dbReference type="InterPro" id="IPR001138">
    <property type="entry name" value="Zn2Cys6_DnaBD"/>
</dbReference>
<dbReference type="PANTHER" id="PTHR47659:SF1">
    <property type="entry name" value="TRANSCRIPTION ACTIVATOR OF GLUCONEOGENESIS ERT1"/>
    <property type="match status" value="1"/>
</dbReference>
<dbReference type="PANTHER" id="PTHR47659">
    <property type="entry name" value="ZN(II)2CYS6 TRANSCRIPTION FACTOR (EUROFUNG)-RELATED"/>
    <property type="match status" value="1"/>
</dbReference>
<dbReference type="Pfam" id="PF24990">
    <property type="entry name" value="PAS_13"/>
    <property type="match status" value="1"/>
</dbReference>
<dbReference type="Pfam" id="PF00172">
    <property type="entry name" value="Zn_clus"/>
    <property type="match status" value="1"/>
</dbReference>
<dbReference type="SMART" id="SM00066">
    <property type="entry name" value="GAL4"/>
    <property type="match status" value="1"/>
</dbReference>
<dbReference type="SUPFAM" id="SSF57701">
    <property type="entry name" value="Zn2/Cys6 DNA-binding domain"/>
    <property type="match status" value="1"/>
</dbReference>
<dbReference type="PROSITE" id="PS50048">
    <property type="entry name" value="ZN2_CY6_FUNGAL_2"/>
    <property type="match status" value="1"/>
</dbReference>
<sequence>MSAVYTLASRPPRPLVPPSYVNPAQMQNAQAGPSTAPSGPKKKSSPTLATVKRKRTDTPEGNSPGSPSPQPQRKGREGPKKKKANRACFHCQKAHLTCDDSRPCQRCVKRGLASNCTEGHRKKAKYLLDEEELEQLKRSKSSAPEIQGNVSAANTADPPSVPIAEPFPQNDSLLTASFDPNFSFGSEAANREYSILSAILGNPSPPESASTPPPPPPPPQSYATWTSDAIDFIGSPRLGTATSSYTSPYGESMQADTTLSTSPGNAHYLTYPYPQSQRSEDLVDMSYASQYSSAGQGQPCLPANSRPRSPPTVFLHNPSSKDQGSRGLLSPPPSNGSPSSTSSAPSGIAEIVRPQSCGSQLQSINDRVLTPYDYTEGYHFLMKHLPTRFEKNDILRIVRALAIFRPSLIALQMPLSLDDEVFVEKCFQRSLVELDKLMSFSGTPTVVWRRTGEICLVAPEFCMLTEWPMEDLVHQKKYIYELFENQSVVEYWENFASHAFENTTQSVYSHCVLLKPSGAPVPSTFCFSIRRDLFDLPSIVIGQWLPLL</sequence>
<accession>B0D0T8</accession>
<reference key="1">
    <citation type="journal article" date="2008" name="Nature">
        <title>The genome of Laccaria bicolor provides insights into mycorrhizal symbiosis.</title>
        <authorList>
            <person name="Martin F."/>
            <person name="Aerts A."/>
            <person name="Ahren D."/>
            <person name="Brun A."/>
            <person name="Danchin E.G.J."/>
            <person name="Duchaussoy F."/>
            <person name="Gibon J."/>
            <person name="Kohler A."/>
            <person name="Lindquist E."/>
            <person name="Pereda V."/>
            <person name="Salamov A."/>
            <person name="Shapiro H.J."/>
            <person name="Wuyts J."/>
            <person name="Blaudez D."/>
            <person name="Buee M."/>
            <person name="Brokstein P."/>
            <person name="Canbaeck B."/>
            <person name="Cohen D."/>
            <person name="Courty P.E."/>
            <person name="Coutinho P.M."/>
            <person name="Delaruelle C."/>
            <person name="Detter J.C."/>
            <person name="Deveau A."/>
            <person name="DiFazio S."/>
            <person name="Duplessis S."/>
            <person name="Fraissinet-Tachet L."/>
            <person name="Lucic E."/>
            <person name="Frey-Klett P."/>
            <person name="Fourrey C."/>
            <person name="Feussner I."/>
            <person name="Gay G."/>
            <person name="Grimwood J."/>
            <person name="Hoegger P.J."/>
            <person name="Jain P."/>
            <person name="Kilaru S."/>
            <person name="Labbe J."/>
            <person name="Lin Y.C."/>
            <person name="Legue V."/>
            <person name="Le Tacon F."/>
            <person name="Marmeisse R."/>
            <person name="Melayah D."/>
            <person name="Montanini B."/>
            <person name="Muratet M."/>
            <person name="Nehls U."/>
            <person name="Niculita-Hirzel H."/>
            <person name="Oudot-Le Secq M.P."/>
            <person name="Peter M."/>
            <person name="Quesneville H."/>
            <person name="Rajashekar B."/>
            <person name="Reich M."/>
            <person name="Rouhier N."/>
            <person name="Schmutz J."/>
            <person name="Yin T."/>
            <person name="Chalot M."/>
            <person name="Henrissat B."/>
            <person name="Kuees U."/>
            <person name="Lucas S."/>
            <person name="Van de Peer Y."/>
            <person name="Podila G.K."/>
            <person name="Polle A."/>
            <person name="Pukkila P.J."/>
            <person name="Richardson P.M."/>
            <person name="Rouze P."/>
            <person name="Sanders I.R."/>
            <person name="Stajich J.E."/>
            <person name="Tunlid A."/>
            <person name="Tuskan G."/>
            <person name="Grigoriev I.V."/>
        </authorList>
    </citation>
    <scope>NUCLEOTIDE SEQUENCE [LARGE SCALE GENOMIC DNA]</scope>
    <source>
        <strain>S238N-H82 / ATCC MYA-4686</strain>
    </source>
</reference>
<evidence type="ECO:0000250" key="1"/>
<evidence type="ECO:0000255" key="2">
    <source>
        <dbReference type="PROSITE-ProRule" id="PRU00227"/>
    </source>
</evidence>
<evidence type="ECO:0000256" key="3">
    <source>
        <dbReference type="SAM" id="MobiDB-lite"/>
    </source>
</evidence>
<evidence type="ECO:0000305" key="4"/>
<organism>
    <name type="scientific">Laccaria bicolor (strain S238N-H82 / ATCC MYA-4686)</name>
    <name type="common">Bicoloured deceiver</name>
    <name type="synonym">Laccaria laccata var. bicolor</name>
    <dbReference type="NCBI Taxonomy" id="486041"/>
    <lineage>
        <taxon>Eukaryota</taxon>
        <taxon>Fungi</taxon>
        <taxon>Dikarya</taxon>
        <taxon>Basidiomycota</taxon>
        <taxon>Agaricomycotina</taxon>
        <taxon>Agaricomycetes</taxon>
        <taxon>Agaricomycetidae</taxon>
        <taxon>Agaricales</taxon>
        <taxon>Agaricineae</taxon>
        <taxon>Hydnangiaceae</taxon>
        <taxon>Laccaria</taxon>
    </lineage>
</organism>
<comment type="function">
    <text evidence="1">Transcription factor which regulates nonfermentable carbon utilization. Activator of gluconeogenetic genes (By similarity).</text>
</comment>
<comment type="subcellular location">
    <subcellularLocation>
        <location evidence="2">Nucleus</location>
    </subcellularLocation>
</comment>
<comment type="similarity">
    <text evidence="4">Belongs to the ERT1/acuK family.</text>
</comment>